<comment type="function">
    <text evidence="2">Component of the shieldin complex, which plays an important role in repair of DNA double-stranded breaks (DSBs). During G1 and S phase of the cell cycle, the complex functions downstream of TP53BP1 to promote non-homologous end joining (NHEJ) and suppress DNA end resection. Mediates various NHEJ-dependent processes including immunoglobulin class-switch recombination, and fusion of unprotected telomeres.</text>
</comment>
<comment type="subunit">
    <text evidence="2 3">Component of the shieldin complex, consisting of SHLD1, SHLD2, SHLD3 and MAD2L2/REV7. Within the complex, SHLD2 forms a scaffold which interacts with a SHLD3-MAD2L2 subcomplex via its N-terminus, and with SHLD1 via its C-terminus (PubMed:29656893). Interacts with ASTE1 (PubMed:34354233).</text>
</comment>
<comment type="interaction">
    <interactant intactId="EBI-20209073">
        <id>Q6ZNX1</id>
    </interactant>
    <interactant intactId="EBI-77889">
        <id>Q9UI95</id>
        <label>MAD2L2</label>
    </interactant>
    <organismsDiffer>false</organismsDiffer>
    <experiments>7</experiments>
</comment>
<comment type="subcellular location">
    <subcellularLocation>
        <location evidence="2">Chromosome</location>
    </subcellularLocation>
    <text evidence="2">Recruited to sites of chromosomal double-stranded breaks during G1 and S phase of the cell cycle.</text>
</comment>
<comment type="miscellaneous">
    <text evidence="2">In BRCA1-deficient cells, function of the shieldin complex is necessary for sensitivity to the PARP inhibitor olaparib.</text>
</comment>
<gene>
    <name evidence="5" type="primary">SHLD3</name>
    <name evidence="5" type="synonym">FLJ26957</name>
    <name evidence="4" type="synonym">RINN1</name>
</gene>
<evidence type="ECO:0000256" key="1">
    <source>
        <dbReference type="SAM" id="MobiDB-lite"/>
    </source>
</evidence>
<evidence type="ECO:0000269" key="2">
    <source>
    </source>
</evidence>
<evidence type="ECO:0000269" key="3">
    <source>
    </source>
</evidence>
<evidence type="ECO:0000303" key="4">
    <source>
    </source>
</evidence>
<evidence type="ECO:0000312" key="5">
    <source>
        <dbReference type="HGNC" id="HGNC:53826"/>
    </source>
</evidence>
<evidence type="ECO:0007829" key="6">
    <source>
        <dbReference type="PDB" id="6KTO"/>
    </source>
</evidence>
<evidence type="ECO:0007829" key="7">
    <source>
        <dbReference type="PDB" id="6M7B"/>
    </source>
</evidence>
<evidence type="ECO:0007829" key="8">
    <source>
        <dbReference type="PDB" id="6WW9"/>
    </source>
</evidence>
<dbReference type="EMBL" id="AK130467">
    <property type="protein sequence ID" value="BAC85360.1"/>
    <property type="molecule type" value="mRNA"/>
</dbReference>
<dbReference type="EMBL" id="AC008560">
    <property type="status" value="NOT_ANNOTATED_CDS"/>
    <property type="molecule type" value="Genomic_DNA"/>
</dbReference>
<dbReference type="CCDS" id="CCDS93722.1"/>
<dbReference type="RefSeq" id="NP_001352270.1">
    <property type="nucleotide sequence ID" value="NM_001365341.2"/>
</dbReference>
<dbReference type="PDB" id="6K07">
    <property type="method" value="X-ray"/>
    <property type="resolution" value="2.24 A"/>
    <property type="chains" value="B=46-74"/>
</dbReference>
<dbReference type="PDB" id="6K08">
    <property type="method" value="X-ray"/>
    <property type="resolution" value="2.31 A"/>
    <property type="chains" value="B=46-74"/>
</dbReference>
<dbReference type="PDB" id="6KTO">
    <property type="method" value="X-ray"/>
    <property type="resolution" value="3.45 A"/>
    <property type="chains" value="C=1-64"/>
</dbReference>
<dbReference type="PDB" id="6M7A">
    <property type="method" value="X-ray"/>
    <property type="resolution" value="1.90 A"/>
    <property type="chains" value="C/D=28-73"/>
</dbReference>
<dbReference type="PDB" id="6M7B">
    <property type="method" value="X-ray"/>
    <property type="resolution" value="1.77 A"/>
    <property type="chains" value="C/D=37-73"/>
</dbReference>
<dbReference type="PDB" id="6VE5">
    <property type="method" value="X-ray"/>
    <property type="resolution" value="2.00 A"/>
    <property type="chains" value="B=41-74"/>
</dbReference>
<dbReference type="PDB" id="6WW9">
    <property type="method" value="X-ray"/>
    <property type="resolution" value="2.70 A"/>
    <property type="chains" value="X/Y=35-58"/>
</dbReference>
<dbReference type="PDB" id="6WWA">
    <property type="method" value="X-ray"/>
    <property type="resolution" value="3.80 A"/>
    <property type="chains" value="X/Y=2-58"/>
</dbReference>
<dbReference type="PDB" id="7L9P">
    <property type="method" value="EM"/>
    <property type="resolution" value="3.60 A"/>
    <property type="chains" value="X/Y=2-58"/>
</dbReference>
<dbReference type="PDBsum" id="6K07"/>
<dbReference type="PDBsum" id="6K08"/>
<dbReference type="PDBsum" id="6KTO"/>
<dbReference type="PDBsum" id="6M7A"/>
<dbReference type="PDBsum" id="6M7B"/>
<dbReference type="PDBsum" id="6VE5"/>
<dbReference type="PDBsum" id="6WW9"/>
<dbReference type="PDBsum" id="6WWA"/>
<dbReference type="PDBsum" id="7L9P"/>
<dbReference type="EMDB" id="EMD-23244"/>
<dbReference type="SMR" id="Q6ZNX1"/>
<dbReference type="ComplexPortal" id="CPX-3481">
    <property type="entry name" value="Shieldin complex"/>
</dbReference>
<dbReference type="CORUM" id="Q6ZNX1"/>
<dbReference type="FunCoup" id="Q6ZNX1">
    <property type="interactions" value="194"/>
</dbReference>
<dbReference type="IntAct" id="Q6ZNX1">
    <property type="interactions" value="39"/>
</dbReference>
<dbReference type="STRING" id="9606.ENSP00000424007"/>
<dbReference type="BioMuta" id="-"/>
<dbReference type="jPOST" id="Q6ZNX1"/>
<dbReference type="MassIVE" id="Q6ZNX1"/>
<dbReference type="PaxDb" id="9606-ENSP00000424007"/>
<dbReference type="PeptideAtlas" id="Q6ZNX1"/>
<dbReference type="Antibodypedia" id="76730">
    <property type="antibodies" value="2 antibodies from 1 providers"/>
</dbReference>
<dbReference type="Ensembl" id="ENST00000510585.3">
    <property type="protein sequence ID" value="ENSP00000424007.2"/>
    <property type="gene ID" value="ENSG00000253251.3"/>
</dbReference>
<dbReference type="GeneID" id="112441434"/>
<dbReference type="MANE-Select" id="ENST00000510585.3">
    <property type="protein sequence ID" value="ENSP00000424007.2"/>
    <property type="RefSeq nucleotide sequence ID" value="NM_001365341.2"/>
    <property type="RefSeq protein sequence ID" value="NP_001352270.1"/>
</dbReference>
<dbReference type="UCSC" id="uc010iwu.2">
    <property type="organism name" value="human"/>
</dbReference>
<dbReference type="AGR" id="HGNC:53826"/>
<dbReference type="GeneCards" id="SHLD3"/>
<dbReference type="HGNC" id="HGNC:53826">
    <property type="gene designation" value="SHLD3"/>
</dbReference>
<dbReference type="HPA" id="ENSG00000253251">
    <property type="expression patterns" value="Tissue enhanced (bone)"/>
</dbReference>
<dbReference type="MIM" id="618030">
    <property type="type" value="gene"/>
</dbReference>
<dbReference type="neXtProt" id="NX_Q6ZNX1"/>
<dbReference type="OpenTargets" id="ENSG00000253251"/>
<dbReference type="VEuPathDB" id="HostDB:ENSG00000253251"/>
<dbReference type="eggNOG" id="ENOG502RXK7">
    <property type="taxonomic scope" value="Eukaryota"/>
</dbReference>
<dbReference type="GeneTree" id="ENSGT00530000065159"/>
<dbReference type="HOGENOM" id="CLU_1250328_0_0_1"/>
<dbReference type="InParanoid" id="Q6ZNX1"/>
<dbReference type="OMA" id="DVVLHYQ"/>
<dbReference type="OrthoDB" id="5963356at2759"/>
<dbReference type="PAN-GO" id="Q6ZNX1">
    <property type="GO annotations" value="3 GO annotations based on evolutionary models"/>
</dbReference>
<dbReference type="TreeFam" id="TF343624"/>
<dbReference type="PathwayCommons" id="Q6ZNX1"/>
<dbReference type="SignaLink" id="Q6ZNX1"/>
<dbReference type="Pharos" id="Q6ZNX1">
    <property type="development level" value="Tbio"/>
</dbReference>
<dbReference type="PRO" id="PR:Q6ZNX1"/>
<dbReference type="Proteomes" id="UP000005640">
    <property type="component" value="Chromosome 5"/>
</dbReference>
<dbReference type="RNAct" id="Q6ZNX1">
    <property type="molecule type" value="protein"/>
</dbReference>
<dbReference type="Bgee" id="ENSG00000253251">
    <property type="expression patterns" value="Expressed in monocyte and 120 other cell types or tissues"/>
</dbReference>
<dbReference type="GO" id="GO:0000785">
    <property type="term" value="C:chromatin"/>
    <property type="evidence" value="ECO:0000303"/>
    <property type="project" value="ComplexPortal"/>
</dbReference>
<dbReference type="GO" id="GO:0005694">
    <property type="term" value="C:chromosome"/>
    <property type="evidence" value="ECO:0000314"/>
    <property type="project" value="UniProtKB"/>
</dbReference>
<dbReference type="GO" id="GO:0005730">
    <property type="term" value="C:nucleolus"/>
    <property type="evidence" value="ECO:0000314"/>
    <property type="project" value="HPA"/>
</dbReference>
<dbReference type="GO" id="GO:0005654">
    <property type="term" value="C:nucleoplasm"/>
    <property type="evidence" value="ECO:0000314"/>
    <property type="project" value="HPA"/>
</dbReference>
<dbReference type="GO" id="GO:0035861">
    <property type="term" value="C:site of double-strand break"/>
    <property type="evidence" value="ECO:0000314"/>
    <property type="project" value="UniProtKB"/>
</dbReference>
<dbReference type="GO" id="GO:0006281">
    <property type="term" value="P:DNA repair"/>
    <property type="evidence" value="ECO:0007669"/>
    <property type="project" value="UniProtKB-KW"/>
</dbReference>
<dbReference type="GO" id="GO:2000042">
    <property type="term" value="P:negative regulation of double-strand break repair via homologous recombination"/>
    <property type="evidence" value="ECO:0000314"/>
    <property type="project" value="UniProtKB"/>
</dbReference>
<dbReference type="GO" id="GO:2001034">
    <property type="term" value="P:positive regulation of double-strand break repair via nonhomologous end joining"/>
    <property type="evidence" value="ECO:0000314"/>
    <property type="project" value="UniProtKB"/>
</dbReference>
<dbReference type="GO" id="GO:0045830">
    <property type="term" value="P:positive regulation of isotype switching"/>
    <property type="evidence" value="ECO:0000314"/>
    <property type="project" value="UniProtKB"/>
</dbReference>
<dbReference type="GO" id="GO:0002208">
    <property type="term" value="P:somatic diversification of immunoglobulins involved in immune response"/>
    <property type="evidence" value="ECO:0000303"/>
    <property type="project" value="ComplexPortal"/>
</dbReference>
<dbReference type="GO" id="GO:0043247">
    <property type="term" value="P:telomere maintenance in response to DNA damage"/>
    <property type="evidence" value="ECO:0000303"/>
    <property type="project" value="ComplexPortal"/>
</dbReference>
<dbReference type="CDD" id="cd22293">
    <property type="entry name" value="RBD_SHLD3_N"/>
    <property type="match status" value="1"/>
</dbReference>
<dbReference type="InterPro" id="IPR039996">
    <property type="entry name" value="Shieldin_RINN1"/>
</dbReference>
<dbReference type="PANTHER" id="PTHR41404">
    <property type="entry name" value="SHIELDIN COMPLEX SUBUNIT 3"/>
    <property type="match status" value="1"/>
</dbReference>
<dbReference type="PANTHER" id="PTHR41404:SF1">
    <property type="entry name" value="SHIELDIN COMPLEX SUBUNIT 3"/>
    <property type="match status" value="1"/>
</dbReference>
<reference key="1">
    <citation type="journal article" date="2004" name="Nat. Genet.">
        <title>Complete sequencing and characterization of 21,243 full-length human cDNAs.</title>
        <authorList>
            <person name="Ota T."/>
            <person name="Suzuki Y."/>
            <person name="Nishikawa T."/>
            <person name="Otsuki T."/>
            <person name="Sugiyama T."/>
            <person name="Irie R."/>
            <person name="Wakamatsu A."/>
            <person name="Hayashi K."/>
            <person name="Sato H."/>
            <person name="Nagai K."/>
            <person name="Kimura K."/>
            <person name="Makita H."/>
            <person name="Sekine M."/>
            <person name="Obayashi M."/>
            <person name="Nishi T."/>
            <person name="Shibahara T."/>
            <person name="Tanaka T."/>
            <person name="Ishii S."/>
            <person name="Yamamoto J."/>
            <person name="Saito K."/>
            <person name="Kawai Y."/>
            <person name="Isono Y."/>
            <person name="Nakamura Y."/>
            <person name="Nagahari K."/>
            <person name="Murakami K."/>
            <person name="Yasuda T."/>
            <person name="Iwayanagi T."/>
            <person name="Wagatsuma M."/>
            <person name="Shiratori A."/>
            <person name="Sudo H."/>
            <person name="Hosoiri T."/>
            <person name="Kaku Y."/>
            <person name="Kodaira H."/>
            <person name="Kondo H."/>
            <person name="Sugawara M."/>
            <person name="Takahashi M."/>
            <person name="Kanda K."/>
            <person name="Yokoi T."/>
            <person name="Furuya T."/>
            <person name="Kikkawa E."/>
            <person name="Omura Y."/>
            <person name="Abe K."/>
            <person name="Kamihara K."/>
            <person name="Katsuta N."/>
            <person name="Sato K."/>
            <person name="Tanikawa M."/>
            <person name="Yamazaki M."/>
            <person name="Ninomiya K."/>
            <person name="Ishibashi T."/>
            <person name="Yamashita H."/>
            <person name="Murakawa K."/>
            <person name="Fujimori K."/>
            <person name="Tanai H."/>
            <person name="Kimata M."/>
            <person name="Watanabe M."/>
            <person name="Hiraoka S."/>
            <person name="Chiba Y."/>
            <person name="Ishida S."/>
            <person name="Ono Y."/>
            <person name="Takiguchi S."/>
            <person name="Watanabe S."/>
            <person name="Yosida M."/>
            <person name="Hotuta T."/>
            <person name="Kusano J."/>
            <person name="Kanehori K."/>
            <person name="Takahashi-Fujii A."/>
            <person name="Hara H."/>
            <person name="Tanase T.-O."/>
            <person name="Nomura Y."/>
            <person name="Togiya S."/>
            <person name="Komai F."/>
            <person name="Hara R."/>
            <person name="Takeuchi K."/>
            <person name="Arita M."/>
            <person name="Imose N."/>
            <person name="Musashino K."/>
            <person name="Yuuki H."/>
            <person name="Oshima A."/>
            <person name="Sasaki N."/>
            <person name="Aotsuka S."/>
            <person name="Yoshikawa Y."/>
            <person name="Matsunawa H."/>
            <person name="Ichihara T."/>
            <person name="Shiohata N."/>
            <person name="Sano S."/>
            <person name="Moriya S."/>
            <person name="Momiyama H."/>
            <person name="Satoh N."/>
            <person name="Takami S."/>
            <person name="Terashima Y."/>
            <person name="Suzuki O."/>
            <person name="Nakagawa S."/>
            <person name="Senoh A."/>
            <person name="Mizoguchi H."/>
            <person name="Goto Y."/>
            <person name="Shimizu F."/>
            <person name="Wakebe H."/>
            <person name="Hishigaki H."/>
            <person name="Watanabe T."/>
            <person name="Sugiyama A."/>
            <person name="Takemoto M."/>
            <person name="Kawakami B."/>
            <person name="Yamazaki M."/>
            <person name="Watanabe K."/>
            <person name="Kumagai A."/>
            <person name="Itakura S."/>
            <person name="Fukuzumi Y."/>
            <person name="Fujimori Y."/>
            <person name="Komiyama M."/>
            <person name="Tashiro H."/>
            <person name="Tanigami A."/>
            <person name="Fujiwara T."/>
            <person name="Ono T."/>
            <person name="Yamada K."/>
            <person name="Fujii Y."/>
            <person name="Ozaki K."/>
            <person name="Hirao M."/>
            <person name="Ohmori Y."/>
            <person name="Kawabata A."/>
            <person name="Hikiji T."/>
            <person name="Kobatake N."/>
            <person name="Inagaki H."/>
            <person name="Ikema Y."/>
            <person name="Okamoto S."/>
            <person name="Okitani R."/>
            <person name="Kawakami T."/>
            <person name="Noguchi S."/>
            <person name="Itoh T."/>
            <person name="Shigeta K."/>
            <person name="Senba T."/>
            <person name="Matsumura K."/>
            <person name="Nakajima Y."/>
            <person name="Mizuno T."/>
            <person name="Morinaga M."/>
            <person name="Sasaki M."/>
            <person name="Togashi T."/>
            <person name="Oyama M."/>
            <person name="Hata H."/>
            <person name="Watanabe M."/>
            <person name="Komatsu T."/>
            <person name="Mizushima-Sugano J."/>
            <person name="Satoh T."/>
            <person name="Shirai Y."/>
            <person name="Takahashi Y."/>
            <person name="Nakagawa K."/>
            <person name="Okumura K."/>
            <person name="Nagase T."/>
            <person name="Nomura N."/>
            <person name="Kikuchi H."/>
            <person name="Masuho Y."/>
            <person name="Yamashita R."/>
            <person name="Nakai K."/>
            <person name="Yada T."/>
            <person name="Nakamura Y."/>
            <person name="Ohara O."/>
            <person name="Isogai T."/>
            <person name="Sugano S."/>
        </authorList>
    </citation>
    <scope>NUCLEOTIDE SEQUENCE [LARGE SCALE MRNA]</scope>
    <source>
        <tissue>Salivary gland</tissue>
    </source>
</reference>
<reference key="2">
    <citation type="journal article" date="2004" name="Nature">
        <title>The DNA sequence and comparative analysis of human chromosome 5.</title>
        <authorList>
            <person name="Schmutz J."/>
            <person name="Martin J."/>
            <person name="Terry A."/>
            <person name="Couronne O."/>
            <person name="Grimwood J."/>
            <person name="Lowry S."/>
            <person name="Gordon L.A."/>
            <person name="Scott D."/>
            <person name="Xie G."/>
            <person name="Huang W."/>
            <person name="Hellsten U."/>
            <person name="Tran-Gyamfi M."/>
            <person name="She X."/>
            <person name="Prabhakar S."/>
            <person name="Aerts A."/>
            <person name="Altherr M."/>
            <person name="Bajorek E."/>
            <person name="Black S."/>
            <person name="Branscomb E."/>
            <person name="Caoile C."/>
            <person name="Challacombe J.F."/>
            <person name="Chan Y.M."/>
            <person name="Denys M."/>
            <person name="Detter J.C."/>
            <person name="Escobar J."/>
            <person name="Flowers D."/>
            <person name="Fotopulos D."/>
            <person name="Glavina T."/>
            <person name="Gomez M."/>
            <person name="Gonzales E."/>
            <person name="Goodstein D."/>
            <person name="Grigoriev I."/>
            <person name="Groza M."/>
            <person name="Hammon N."/>
            <person name="Hawkins T."/>
            <person name="Haydu L."/>
            <person name="Israni S."/>
            <person name="Jett J."/>
            <person name="Kadner K."/>
            <person name="Kimball H."/>
            <person name="Kobayashi A."/>
            <person name="Lopez F."/>
            <person name="Lou Y."/>
            <person name="Martinez D."/>
            <person name="Medina C."/>
            <person name="Morgan J."/>
            <person name="Nandkeshwar R."/>
            <person name="Noonan J.P."/>
            <person name="Pitluck S."/>
            <person name="Pollard M."/>
            <person name="Predki P."/>
            <person name="Priest J."/>
            <person name="Ramirez L."/>
            <person name="Retterer J."/>
            <person name="Rodriguez A."/>
            <person name="Rogers S."/>
            <person name="Salamov A."/>
            <person name="Salazar A."/>
            <person name="Thayer N."/>
            <person name="Tice H."/>
            <person name="Tsai M."/>
            <person name="Ustaszewska A."/>
            <person name="Vo N."/>
            <person name="Wheeler J."/>
            <person name="Wu K."/>
            <person name="Yang J."/>
            <person name="Dickson M."/>
            <person name="Cheng J.-F."/>
            <person name="Eichler E.E."/>
            <person name="Olsen A."/>
            <person name="Pennacchio L.A."/>
            <person name="Rokhsar D.S."/>
            <person name="Richardson P."/>
            <person name="Lucas S.M."/>
            <person name="Myers R.M."/>
            <person name="Rubin E.M."/>
        </authorList>
    </citation>
    <scope>NUCLEOTIDE SEQUENCE [LARGE SCALE GENOMIC DNA]</scope>
</reference>
<reference key="3">
    <citation type="journal article" date="2018" name="Cell">
        <title>DNA repair network analysis reveals shieldin as a key regulator of NHEJ and PARP inhibitor sensitivity.</title>
        <authorList>
            <person name="Gupta R."/>
            <person name="Somyajit K."/>
            <person name="Narita T."/>
            <person name="Maskey E."/>
            <person name="Stanlie A."/>
            <person name="Kremer M."/>
            <person name="Typas D."/>
            <person name="Lammers M."/>
            <person name="Mailand N."/>
            <person name="Nussenzweig A."/>
            <person name="Lukas J."/>
            <person name="Choudhary C."/>
        </authorList>
    </citation>
    <scope>FUNCTION</scope>
    <scope>IDENTIFICATION IN THE SHIELDIN COMPLEX</scope>
    <scope>INTERACTION WITH MAD2L2 AND SHLD2</scope>
    <scope>SUBCELLULAR LOCATION</scope>
    <scope>MUTAGENESIS OF 53-PRO--PRO-58</scope>
    <scope>IDENTIFICATION BY MASS SPECTROMETRY</scope>
</reference>
<reference key="4">
    <citation type="journal article" date="2021" name="Nat. Cell Biol.">
        <title>ASTE1 promotes shieldin-complex-mediated DNA repair by attenuating end resection.</title>
        <authorList>
            <person name="Zhao F."/>
            <person name="Kim W."/>
            <person name="Gao H."/>
            <person name="Liu C."/>
            <person name="Zhang Y."/>
            <person name="Chen Y."/>
            <person name="Deng M."/>
            <person name="Zhou Q."/>
            <person name="Huang J."/>
            <person name="Hu Q."/>
            <person name="Chen S.H."/>
            <person name="Nowsheen S."/>
            <person name="Kloeber J.A."/>
            <person name="Qin B."/>
            <person name="Yin P."/>
            <person name="Tu X."/>
            <person name="Guo G."/>
            <person name="Qin S."/>
            <person name="Zhang C."/>
            <person name="Gao M."/>
            <person name="Luo K."/>
            <person name="Liu Y."/>
            <person name="Lou Z."/>
            <person name="Yuan J."/>
        </authorList>
    </citation>
    <scope>INTERACTION WITH ASTE1</scope>
</reference>
<protein>
    <recommendedName>
        <fullName evidence="5">Shieldin complex subunit 3</fullName>
    </recommendedName>
    <alternativeName>
        <fullName evidence="4">REV7-interacting novel NHEJ regulator 1</fullName>
    </alternativeName>
    <alternativeName>
        <fullName>Shield complex subunit 3</fullName>
    </alternativeName>
</protein>
<feature type="chain" id="PRO_0000439346" description="Shieldin complex subunit 3">
    <location>
        <begin position="1"/>
        <end position="250"/>
    </location>
</feature>
<feature type="region of interest" description="Sufficient for interaction with MAD2L2" evidence="2">
    <location>
        <begin position="28"/>
        <end position="83"/>
    </location>
</feature>
<feature type="region of interest" description="Disordered" evidence="1">
    <location>
        <begin position="108"/>
        <end position="129"/>
    </location>
</feature>
<feature type="compositionally biased region" description="Polar residues" evidence="1">
    <location>
        <begin position="108"/>
        <end position="119"/>
    </location>
</feature>
<feature type="mutagenesis site" description="Fails to interact with MAD2L2." evidence="2">
    <original>PKRSPP</original>
    <variation>AKRSPA</variation>
    <location>
        <begin position="53"/>
        <end position="58"/>
    </location>
</feature>
<feature type="strand" evidence="6">
    <location>
        <begin position="4"/>
        <end position="9"/>
    </location>
</feature>
<feature type="helix" evidence="6">
    <location>
        <begin position="19"/>
        <end position="27"/>
    </location>
</feature>
<feature type="strand" evidence="8">
    <location>
        <begin position="46"/>
        <end position="48"/>
    </location>
</feature>
<feature type="strand" evidence="7">
    <location>
        <begin position="51"/>
        <end position="55"/>
    </location>
</feature>
<feature type="helix" evidence="7">
    <location>
        <begin position="62"/>
        <end position="71"/>
    </location>
</feature>
<name>SHLD3_HUMAN</name>
<organism>
    <name type="scientific">Homo sapiens</name>
    <name type="common">Human</name>
    <dbReference type="NCBI Taxonomy" id="9606"/>
    <lineage>
        <taxon>Eukaryota</taxon>
        <taxon>Metazoa</taxon>
        <taxon>Chordata</taxon>
        <taxon>Craniata</taxon>
        <taxon>Vertebrata</taxon>
        <taxon>Euteleostomi</taxon>
        <taxon>Mammalia</taxon>
        <taxon>Eutheria</taxon>
        <taxon>Euarchontoglires</taxon>
        <taxon>Primates</taxon>
        <taxon>Haplorrhini</taxon>
        <taxon>Catarrhini</taxon>
        <taxon>Hominidae</taxon>
        <taxon>Homo</taxon>
    </lineage>
</organism>
<accession>Q6ZNX1</accession>
<keyword id="KW-0002">3D-structure</keyword>
<keyword id="KW-0158">Chromosome</keyword>
<keyword id="KW-0227">DNA damage</keyword>
<keyword id="KW-0234">DNA repair</keyword>
<keyword id="KW-1267">Proteomics identification</keyword>
<keyword id="KW-1185">Reference proteome</keyword>
<proteinExistence type="evidence at protein level"/>
<sequence length="250" mass="28842">MTTEVILHYRPCESDPTQLPKIAEKAIQDFPTRPLSRFIPWFPYDGSKLPLRPKRSPPVISEEAAEDVKQYLTISEHDAKSHSYDCTVDLLEFQPSLKKQHLTWSHTLKEQTNSGNLGKQSEKGKQHKRRSWSISLPSNNCTKNVSPLSKKLQDSLKALNLHSLYRARWTIEHTICNSQTLEDIWTKLNQIIRHNELPSCNATIQRHLGQIWVFCDIMYCEYVGSLLKGRLALTGKINLFVHKYGVIFSM</sequence>